<dbReference type="EMBL" id="DQ363562">
    <property type="protein sequence ID" value="ABC88651.1"/>
    <property type="molecule type" value="mRNA"/>
</dbReference>
<dbReference type="EMBL" id="DQ423529">
    <property type="protein sequence ID" value="ABD83948.1"/>
    <property type="molecule type" value="mRNA"/>
</dbReference>
<dbReference type="EMBL" id="AL109947">
    <property type="status" value="NOT_ANNOTATED_CDS"/>
    <property type="molecule type" value="Genomic_DNA"/>
</dbReference>
<dbReference type="EMBL" id="AL359711">
    <property type="status" value="NOT_ANNOTATED_CDS"/>
    <property type="molecule type" value="Genomic_DNA"/>
</dbReference>
<dbReference type="EMBL" id="CH471051">
    <property type="protein sequence ID" value="EAW48347.1"/>
    <property type="molecule type" value="Genomic_DNA"/>
</dbReference>
<dbReference type="EMBL" id="BC038716">
    <property type="protein sequence ID" value="AAH38716.1"/>
    <property type="molecule type" value="mRNA"/>
</dbReference>
<dbReference type="CCDS" id="CCDS47466.2">
    <molecule id="Q8IXY8-2"/>
</dbReference>
<dbReference type="CCDS" id="CCDS5074.1">
    <molecule id="Q8IXY8-1"/>
</dbReference>
<dbReference type="CCDS" id="CCDS69169.1">
    <molecule id="Q8IXY8-3"/>
</dbReference>
<dbReference type="RefSeq" id="NP_001104768.2">
    <molecule id="Q8IXY8-2"/>
    <property type="nucleotide sequence ID" value="NM_001111298.2"/>
</dbReference>
<dbReference type="RefSeq" id="NP_001273289.1">
    <molecule id="Q8IXY8-3"/>
    <property type="nucleotide sequence ID" value="NM_001286360.1"/>
</dbReference>
<dbReference type="RefSeq" id="NP_001273290.1">
    <property type="nucleotide sequence ID" value="NM_001286361.1"/>
</dbReference>
<dbReference type="RefSeq" id="NP_775943.1">
    <molecule id="Q8IXY8-1"/>
    <property type="nucleotide sequence ID" value="NM_173672.5"/>
</dbReference>
<dbReference type="PDB" id="8J07">
    <property type="method" value="EM"/>
    <property type="resolution" value="4.10 A"/>
    <property type="chains" value="S/s=1-311"/>
</dbReference>
<dbReference type="PDBsum" id="8J07"/>
<dbReference type="EMDB" id="EMD-35888"/>
<dbReference type="SMR" id="Q8IXY8"/>
<dbReference type="BioGRID" id="130200">
    <property type="interactions" value="7"/>
</dbReference>
<dbReference type="FunCoup" id="Q8IXY8">
    <property type="interactions" value="413"/>
</dbReference>
<dbReference type="IntAct" id="Q8IXY8">
    <property type="interactions" value="4"/>
</dbReference>
<dbReference type="STRING" id="9606.ENSP00000392257"/>
<dbReference type="iPTMnet" id="Q8IXY8"/>
<dbReference type="PhosphoSitePlus" id="Q8IXY8"/>
<dbReference type="BioMuta" id="PPIL6"/>
<dbReference type="DMDM" id="74762491"/>
<dbReference type="MassIVE" id="Q8IXY8"/>
<dbReference type="PaxDb" id="9606-ENSP00000392257"/>
<dbReference type="PeptideAtlas" id="Q8IXY8"/>
<dbReference type="ProteomicsDB" id="18957"/>
<dbReference type="ProteomicsDB" id="71076">
    <molecule id="Q8IXY8-1"/>
</dbReference>
<dbReference type="ProteomicsDB" id="71077">
    <molecule id="Q8IXY8-2"/>
</dbReference>
<dbReference type="Antibodypedia" id="32250">
    <property type="antibodies" value="189 antibodies from 18 providers"/>
</dbReference>
<dbReference type="DNASU" id="285755"/>
<dbReference type="Ensembl" id="ENST00000424445.6">
    <molecule id="Q8IXY8-3"/>
    <property type="protein sequence ID" value="ENSP00000407731.2"/>
    <property type="gene ID" value="ENSG00000185250.16"/>
</dbReference>
<dbReference type="Ensembl" id="ENST00000440797.6">
    <molecule id="Q8IXY8-2"/>
    <property type="protein sequence ID" value="ENSP00000392257.2"/>
    <property type="gene ID" value="ENSG00000185250.16"/>
</dbReference>
<dbReference type="Ensembl" id="ENST00000521072.7">
    <molecule id="Q8IXY8-1"/>
    <property type="protein sequence ID" value="ENSP00000427929.1"/>
    <property type="gene ID" value="ENSG00000185250.16"/>
</dbReference>
<dbReference type="GeneID" id="285755"/>
<dbReference type="KEGG" id="hsa:285755"/>
<dbReference type="MANE-Select" id="ENST00000521072.7">
    <property type="protein sequence ID" value="ENSP00000427929.1"/>
    <property type="RefSeq nucleotide sequence ID" value="NM_173672.5"/>
    <property type="RefSeq protein sequence ID" value="NP_775943.1"/>
</dbReference>
<dbReference type="UCSC" id="uc003ptg.4">
    <molecule id="Q8IXY8-1"/>
    <property type="organism name" value="human"/>
</dbReference>
<dbReference type="AGR" id="HGNC:21557"/>
<dbReference type="CTD" id="285755"/>
<dbReference type="DisGeNET" id="285755"/>
<dbReference type="GeneCards" id="PPIL6"/>
<dbReference type="HGNC" id="HGNC:21557">
    <property type="gene designation" value="PPIL6"/>
</dbReference>
<dbReference type="HPA" id="ENSG00000185250">
    <property type="expression patterns" value="Tissue enhanced (fallopian tube, testis)"/>
</dbReference>
<dbReference type="neXtProt" id="NX_Q8IXY8"/>
<dbReference type="OpenTargets" id="ENSG00000185250"/>
<dbReference type="PharmGKB" id="PA134939571"/>
<dbReference type="VEuPathDB" id="HostDB:ENSG00000185250"/>
<dbReference type="eggNOG" id="KOG0546">
    <property type="taxonomic scope" value="Eukaryota"/>
</dbReference>
<dbReference type="GeneTree" id="ENSGT00940000159634"/>
<dbReference type="HOGENOM" id="CLU_058893_1_0_1"/>
<dbReference type="InParanoid" id="Q8IXY8"/>
<dbReference type="OMA" id="ECKIINC"/>
<dbReference type="OrthoDB" id="408413at2759"/>
<dbReference type="PAN-GO" id="Q8IXY8">
    <property type="GO annotations" value="3 GO annotations based on evolutionary models"/>
</dbReference>
<dbReference type="PhylomeDB" id="Q8IXY8"/>
<dbReference type="TreeFam" id="TF351326"/>
<dbReference type="PathwayCommons" id="Q8IXY8"/>
<dbReference type="SignaLink" id="Q8IXY8"/>
<dbReference type="BioGRID-ORCS" id="285755">
    <property type="hits" value="10 hits in 1145 CRISPR screens"/>
</dbReference>
<dbReference type="ChiTaRS" id="PPIL6">
    <property type="organism name" value="human"/>
</dbReference>
<dbReference type="GenomeRNAi" id="285755"/>
<dbReference type="Pharos" id="Q8IXY8">
    <property type="development level" value="Tdark"/>
</dbReference>
<dbReference type="PRO" id="PR:Q8IXY8"/>
<dbReference type="Proteomes" id="UP000005640">
    <property type="component" value="Chromosome 6"/>
</dbReference>
<dbReference type="RNAct" id="Q8IXY8">
    <property type="molecule type" value="protein"/>
</dbReference>
<dbReference type="Bgee" id="ENSG00000185250">
    <property type="expression patterns" value="Expressed in right uterine tube and 110 other cell types or tissues"/>
</dbReference>
<dbReference type="ExpressionAtlas" id="Q8IXY8">
    <property type="expression patterns" value="baseline and differential"/>
</dbReference>
<dbReference type="GO" id="GO:0005737">
    <property type="term" value="C:cytoplasm"/>
    <property type="evidence" value="ECO:0000318"/>
    <property type="project" value="GO_Central"/>
</dbReference>
<dbReference type="FunFam" id="2.40.100.10:FF:000024">
    <property type="entry name" value="Peptidyl-prolyl cis-trans isomerase"/>
    <property type="match status" value="1"/>
</dbReference>
<dbReference type="Gene3D" id="2.40.100.10">
    <property type="entry name" value="Cyclophilin-like"/>
    <property type="match status" value="1"/>
</dbReference>
<dbReference type="InterPro" id="IPR029000">
    <property type="entry name" value="Cyclophilin-like_dom_sf"/>
</dbReference>
<dbReference type="InterPro" id="IPR002130">
    <property type="entry name" value="Cyclophilin-type_PPIase_dom"/>
</dbReference>
<dbReference type="PANTHER" id="PTHR11071">
    <property type="entry name" value="PEPTIDYL-PROLYL CIS-TRANS ISOMERASE"/>
    <property type="match status" value="1"/>
</dbReference>
<dbReference type="PANTHER" id="PTHR11071:SF561">
    <property type="entry name" value="PEPTIDYL-PROLYL CIS-TRANS ISOMERASE D-RELATED"/>
    <property type="match status" value="1"/>
</dbReference>
<dbReference type="Pfam" id="PF00160">
    <property type="entry name" value="Pro_isomerase"/>
    <property type="match status" value="1"/>
</dbReference>
<dbReference type="PRINTS" id="PR00153">
    <property type="entry name" value="CSAPPISMRASE"/>
</dbReference>
<dbReference type="SUPFAM" id="SSF50891">
    <property type="entry name" value="Cyclophilin-like"/>
    <property type="match status" value="1"/>
</dbReference>
<dbReference type="PROSITE" id="PS50072">
    <property type="entry name" value="CSA_PPIASE_2"/>
    <property type="match status" value="1"/>
</dbReference>
<proteinExistence type="evidence at protein level"/>
<protein>
    <recommendedName>
        <fullName evidence="5">Probable inactive peptidyl-prolyl cis-trans isomerase-like 6</fullName>
        <shortName evidence="5">PPIase</shortName>
    </recommendedName>
    <alternativeName>
        <fullName evidence="6">Cyclophilin-like protein PPIL6</fullName>
    </alternativeName>
    <alternativeName>
        <fullName>Rotamase PPIL6</fullName>
    </alternativeName>
</protein>
<reference key="1">
    <citation type="submission" date="2006-01" db="EMBL/GenBank/DDBJ databases">
        <authorList>
            <person name="Chen S."/>
            <person name="Yu L."/>
        </authorList>
    </citation>
    <scope>NUCLEOTIDE SEQUENCE [MRNA] (ISOFORMS 1 AND 2)</scope>
</reference>
<reference key="2">
    <citation type="journal article" date="2003" name="Nature">
        <title>The DNA sequence and analysis of human chromosome 6.</title>
        <authorList>
            <person name="Mungall A.J."/>
            <person name="Palmer S.A."/>
            <person name="Sims S.K."/>
            <person name="Edwards C.A."/>
            <person name="Ashurst J.L."/>
            <person name="Wilming L."/>
            <person name="Jones M.C."/>
            <person name="Horton R."/>
            <person name="Hunt S.E."/>
            <person name="Scott C.E."/>
            <person name="Gilbert J.G.R."/>
            <person name="Clamp M.E."/>
            <person name="Bethel G."/>
            <person name="Milne S."/>
            <person name="Ainscough R."/>
            <person name="Almeida J.P."/>
            <person name="Ambrose K.D."/>
            <person name="Andrews T.D."/>
            <person name="Ashwell R.I.S."/>
            <person name="Babbage A.K."/>
            <person name="Bagguley C.L."/>
            <person name="Bailey J."/>
            <person name="Banerjee R."/>
            <person name="Barker D.J."/>
            <person name="Barlow K.F."/>
            <person name="Bates K."/>
            <person name="Beare D.M."/>
            <person name="Beasley H."/>
            <person name="Beasley O."/>
            <person name="Bird C.P."/>
            <person name="Blakey S.E."/>
            <person name="Bray-Allen S."/>
            <person name="Brook J."/>
            <person name="Brown A.J."/>
            <person name="Brown J.Y."/>
            <person name="Burford D.C."/>
            <person name="Burrill W."/>
            <person name="Burton J."/>
            <person name="Carder C."/>
            <person name="Carter N.P."/>
            <person name="Chapman J.C."/>
            <person name="Clark S.Y."/>
            <person name="Clark G."/>
            <person name="Clee C.M."/>
            <person name="Clegg S."/>
            <person name="Cobley V."/>
            <person name="Collier R.E."/>
            <person name="Collins J.E."/>
            <person name="Colman L.K."/>
            <person name="Corby N.R."/>
            <person name="Coville G.J."/>
            <person name="Culley K.M."/>
            <person name="Dhami P."/>
            <person name="Davies J."/>
            <person name="Dunn M."/>
            <person name="Earthrowl M.E."/>
            <person name="Ellington A.E."/>
            <person name="Evans K.A."/>
            <person name="Faulkner L."/>
            <person name="Francis M.D."/>
            <person name="Frankish A."/>
            <person name="Frankland J."/>
            <person name="French L."/>
            <person name="Garner P."/>
            <person name="Garnett J."/>
            <person name="Ghori M.J."/>
            <person name="Gilby L.M."/>
            <person name="Gillson C.J."/>
            <person name="Glithero R.J."/>
            <person name="Grafham D.V."/>
            <person name="Grant M."/>
            <person name="Gribble S."/>
            <person name="Griffiths C."/>
            <person name="Griffiths M.N.D."/>
            <person name="Hall R."/>
            <person name="Halls K.S."/>
            <person name="Hammond S."/>
            <person name="Harley J.L."/>
            <person name="Hart E.A."/>
            <person name="Heath P.D."/>
            <person name="Heathcott R."/>
            <person name="Holmes S.J."/>
            <person name="Howden P.J."/>
            <person name="Howe K.L."/>
            <person name="Howell G.R."/>
            <person name="Huckle E."/>
            <person name="Humphray S.J."/>
            <person name="Humphries M.D."/>
            <person name="Hunt A.R."/>
            <person name="Johnson C.M."/>
            <person name="Joy A.A."/>
            <person name="Kay M."/>
            <person name="Keenan S.J."/>
            <person name="Kimberley A.M."/>
            <person name="King A."/>
            <person name="Laird G.K."/>
            <person name="Langford C."/>
            <person name="Lawlor S."/>
            <person name="Leongamornlert D.A."/>
            <person name="Leversha M."/>
            <person name="Lloyd C.R."/>
            <person name="Lloyd D.M."/>
            <person name="Loveland J.E."/>
            <person name="Lovell J."/>
            <person name="Martin S."/>
            <person name="Mashreghi-Mohammadi M."/>
            <person name="Maslen G.L."/>
            <person name="Matthews L."/>
            <person name="McCann O.T."/>
            <person name="McLaren S.J."/>
            <person name="McLay K."/>
            <person name="McMurray A."/>
            <person name="Moore M.J.F."/>
            <person name="Mullikin J.C."/>
            <person name="Niblett D."/>
            <person name="Nickerson T."/>
            <person name="Novik K.L."/>
            <person name="Oliver K."/>
            <person name="Overton-Larty E.K."/>
            <person name="Parker A."/>
            <person name="Patel R."/>
            <person name="Pearce A.V."/>
            <person name="Peck A.I."/>
            <person name="Phillimore B.J.C.T."/>
            <person name="Phillips S."/>
            <person name="Plumb R.W."/>
            <person name="Porter K.M."/>
            <person name="Ramsey Y."/>
            <person name="Ranby S.A."/>
            <person name="Rice C.M."/>
            <person name="Ross M.T."/>
            <person name="Searle S.M."/>
            <person name="Sehra H.K."/>
            <person name="Sheridan E."/>
            <person name="Skuce C.D."/>
            <person name="Smith S."/>
            <person name="Smith M."/>
            <person name="Spraggon L."/>
            <person name="Squares S.L."/>
            <person name="Steward C.A."/>
            <person name="Sycamore N."/>
            <person name="Tamlyn-Hall G."/>
            <person name="Tester J."/>
            <person name="Theaker A.J."/>
            <person name="Thomas D.W."/>
            <person name="Thorpe A."/>
            <person name="Tracey A."/>
            <person name="Tromans A."/>
            <person name="Tubby B."/>
            <person name="Wall M."/>
            <person name="Wallis J.M."/>
            <person name="West A.P."/>
            <person name="White S.S."/>
            <person name="Whitehead S.L."/>
            <person name="Whittaker H."/>
            <person name="Wild A."/>
            <person name="Willey D.J."/>
            <person name="Wilmer T.E."/>
            <person name="Wood J.M."/>
            <person name="Wray P.W."/>
            <person name="Wyatt J.C."/>
            <person name="Young L."/>
            <person name="Younger R.M."/>
            <person name="Bentley D.R."/>
            <person name="Coulson A."/>
            <person name="Durbin R.M."/>
            <person name="Hubbard T."/>
            <person name="Sulston J.E."/>
            <person name="Dunham I."/>
            <person name="Rogers J."/>
            <person name="Beck S."/>
        </authorList>
    </citation>
    <scope>NUCLEOTIDE SEQUENCE [LARGE SCALE GENOMIC DNA]</scope>
</reference>
<reference key="3">
    <citation type="submission" date="2005-09" db="EMBL/GenBank/DDBJ databases">
        <authorList>
            <person name="Mural R.J."/>
            <person name="Istrail S."/>
            <person name="Sutton G.G."/>
            <person name="Florea L."/>
            <person name="Halpern A.L."/>
            <person name="Mobarry C.M."/>
            <person name="Lippert R."/>
            <person name="Walenz B."/>
            <person name="Shatkay H."/>
            <person name="Dew I."/>
            <person name="Miller J.R."/>
            <person name="Flanigan M.J."/>
            <person name="Edwards N.J."/>
            <person name="Bolanos R."/>
            <person name="Fasulo D."/>
            <person name="Halldorsson B.V."/>
            <person name="Hannenhalli S."/>
            <person name="Turner R."/>
            <person name="Yooseph S."/>
            <person name="Lu F."/>
            <person name="Nusskern D.R."/>
            <person name="Shue B.C."/>
            <person name="Zheng X.H."/>
            <person name="Zhong F."/>
            <person name="Delcher A.L."/>
            <person name="Huson D.H."/>
            <person name="Kravitz S.A."/>
            <person name="Mouchard L."/>
            <person name="Reinert K."/>
            <person name="Remington K.A."/>
            <person name="Clark A.G."/>
            <person name="Waterman M.S."/>
            <person name="Eichler E.E."/>
            <person name="Adams M.D."/>
            <person name="Hunkapiller M.W."/>
            <person name="Myers E.W."/>
            <person name="Venter J.C."/>
        </authorList>
    </citation>
    <scope>NUCLEOTIDE SEQUENCE [LARGE SCALE GENOMIC DNA]</scope>
</reference>
<reference key="4">
    <citation type="journal article" date="2004" name="Genome Res.">
        <title>The status, quality, and expansion of the NIH full-length cDNA project: the Mammalian Gene Collection (MGC).</title>
        <authorList>
            <consortium name="The MGC Project Team"/>
        </authorList>
    </citation>
    <scope>NUCLEOTIDE SEQUENCE [LARGE SCALE MRNA] (ISOFORM 1)</scope>
    <source>
        <tissue>Testis</tissue>
    </source>
</reference>
<reference key="5">
    <citation type="journal article" date="2010" name="PLoS Biol.">
        <title>Structural and biochemical characterization of the human cyclophilin family of peptidyl-prolyl isomerases.</title>
        <authorList>
            <person name="Davis T.L."/>
            <person name="Walker J.R."/>
            <person name="Campagna-Slater V."/>
            <person name="Finerty P.J."/>
            <person name="Paramanathan R."/>
            <person name="Bernstein G."/>
            <person name="MacKenzie F."/>
            <person name="Tempel W."/>
            <person name="Ouyang H."/>
            <person name="Lee W.H."/>
            <person name="Eisenmesser E.Z."/>
            <person name="Dhe-Paganon S."/>
        </authorList>
    </citation>
    <scope>FUNCTION</scope>
    <scope>CAUTION</scope>
</reference>
<gene>
    <name evidence="7" type="primary">PPIL6</name>
</gene>
<feature type="chain" id="PRO_0000263755" description="Probable inactive peptidyl-prolyl cis-trans isomerase-like 6">
    <location>
        <begin position="1"/>
        <end position="311"/>
    </location>
</feature>
<feature type="domain" description="PPIase cyclophilin-type" evidence="1">
    <location>
        <begin position="145"/>
        <end position="308"/>
    </location>
</feature>
<feature type="splice variant" id="VSP_055658" description="In isoform 3." evidence="4">
    <location>
        <begin position="46"/>
        <end position="77"/>
    </location>
</feature>
<feature type="splice variant" id="VSP_043036" description="In isoform 2." evidence="3">
    <original>E</original>
    <variation>EELYGSLKRSVKRQKESRGVGKIEKYR</variation>
    <location>
        <position position="229"/>
    </location>
</feature>
<feature type="sequence variant" id="VAR_029620" description="In dbSNP:rs9398200.">
    <original>H</original>
    <variation>R</variation>
    <location>
        <position position="110"/>
    </location>
</feature>
<sequence length="311" mass="35228">MARPQPCGPPHARCGSPSLPERPLQVKVVGLFSCPNFQIAKSAAENLKNNHPSKFEDPILVPLQEFAWHQYLQEKKRELKNETWEYSSSVISFVNGQFLGDALDLQKWAHEVWDIVDIKPSALYDALTEDFSAKFLRDTKHDFVFLDICIDSSPIGRLIFELYCDVCPKTCKNFQVLCTGKAGFSQRGIRLHYKNSIFHRIVQNGWIQGGDIVYGKGDNGESIYGPTFEDENFSVPHNKRGVLGMANKGRHSNGSQFYITLQATPYLDRKFVAFGQLIEGTEVLKQLELVPTQNERPIHMCRITDSGDPYA</sequence>
<name>PPIL6_HUMAN</name>
<comment type="function">
    <text evidence="2">Probable inactive PPIase with no peptidyl-prolyl cis-trans isomerase activity.</text>
</comment>
<comment type="interaction">
    <interactant intactId="EBI-12226639">
        <id>Q8IXY8</id>
    </interactant>
    <interactant intactId="EBI-743771">
        <id>Q92624</id>
        <label>APPBP2</label>
    </interactant>
    <organismsDiffer>false</organismsDiffer>
    <experiments>3</experiments>
</comment>
<comment type="interaction">
    <interactant intactId="EBI-12226639">
        <id>Q8IXY8</id>
    </interactant>
    <interactant intactId="EBI-2949658">
        <id>O95429</id>
        <label>BAG4</label>
    </interactant>
    <organismsDiffer>false</organismsDiffer>
    <experiments>3</experiments>
</comment>
<comment type="interaction">
    <interactant intactId="EBI-12226639">
        <id>Q8IXY8</id>
    </interactant>
    <interactant intactId="EBI-12191873">
        <id>Q86UB2</id>
        <label>BIVM</label>
    </interactant>
    <organismsDiffer>false</organismsDiffer>
    <experiments>3</experiments>
</comment>
<comment type="interaction">
    <interactant intactId="EBI-12226639">
        <id>Q8IXY8</id>
    </interactant>
    <interactant intactId="EBI-741237">
        <id>O60504</id>
        <label>SORBS3</label>
    </interactant>
    <organismsDiffer>false</organismsDiffer>
    <experiments>3</experiments>
</comment>
<comment type="alternative products">
    <event type="alternative splicing"/>
    <isoform>
        <id>Q8IXY8-1</id>
        <name>1</name>
        <sequence type="displayed"/>
    </isoform>
    <isoform>
        <id>Q8IXY8-2</id>
        <name>2</name>
        <sequence type="described" ref="VSP_043036"/>
    </isoform>
    <isoform>
        <id>Q8IXY8-3</id>
        <name>3</name>
        <sequence type="described" ref="VSP_055658"/>
    </isoform>
</comment>
<comment type="similarity">
    <text evidence="4">Belongs to the cyclophilin-type PPIase family.</text>
</comment>
<comment type="caution">
    <text evidence="2">Despite the fact that it belongs to the cyclophilin-type PPIase family, a report has shown that it has probably no peptidyl-prolyl cis-trans isomerase activity.</text>
</comment>
<accession>Q8IXY8</accession>
<accession>A9NIU0</accession>
<accession>A9NIU9</accession>
<accession>E7EX15</accession>
<evidence type="ECO:0000255" key="1">
    <source>
        <dbReference type="PROSITE-ProRule" id="PRU00156"/>
    </source>
</evidence>
<evidence type="ECO:0000269" key="2">
    <source>
    </source>
</evidence>
<evidence type="ECO:0000303" key="3">
    <source ref="1"/>
</evidence>
<evidence type="ECO:0000305" key="4"/>
<evidence type="ECO:0000305" key="5">
    <source>
    </source>
</evidence>
<evidence type="ECO:0000312" key="6">
    <source>
        <dbReference type="EMBL" id="ABC88651.1"/>
    </source>
</evidence>
<evidence type="ECO:0000312" key="7">
    <source>
        <dbReference type="HGNC" id="HGNC:21557"/>
    </source>
</evidence>
<keyword id="KW-0002">3D-structure</keyword>
<keyword id="KW-0025">Alternative splicing</keyword>
<keyword id="KW-1267">Proteomics identification</keyword>
<keyword id="KW-1185">Reference proteome</keyword>
<organism>
    <name type="scientific">Homo sapiens</name>
    <name type="common">Human</name>
    <dbReference type="NCBI Taxonomy" id="9606"/>
    <lineage>
        <taxon>Eukaryota</taxon>
        <taxon>Metazoa</taxon>
        <taxon>Chordata</taxon>
        <taxon>Craniata</taxon>
        <taxon>Vertebrata</taxon>
        <taxon>Euteleostomi</taxon>
        <taxon>Mammalia</taxon>
        <taxon>Eutheria</taxon>
        <taxon>Euarchontoglires</taxon>
        <taxon>Primates</taxon>
        <taxon>Haplorrhini</taxon>
        <taxon>Catarrhini</taxon>
        <taxon>Hominidae</taxon>
        <taxon>Homo</taxon>
    </lineage>
</organism>